<gene>
    <name evidence="1" type="primary">rplE</name>
    <name type="ordered locus">RPE_3574</name>
</gene>
<dbReference type="EMBL" id="CP000463">
    <property type="protein sequence ID" value="ABJ07504.1"/>
    <property type="molecule type" value="Genomic_DNA"/>
</dbReference>
<dbReference type="SMR" id="Q07KN0"/>
<dbReference type="STRING" id="316055.RPE_3574"/>
<dbReference type="KEGG" id="rpe:RPE_3574"/>
<dbReference type="eggNOG" id="COG0094">
    <property type="taxonomic scope" value="Bacteria"/>
</dbReference>
<dbReference type="HOGENOM" id="CLU_061015_2_1_5"/>
<dbReference type="OrthoDB" id="9806626at2"/>
<dbReference type="GO" id="GO:1990904">
    <property type="term" value="C:ribonucleoprotein complex"/>
    <property type="evidence" value="ECO:0007669"/>
    <property type="project" value="UniProtKB-KW"/>
</dbReference>
<dbReference type="GO" id="GO:0005840">
    <property type="term" value="C:ribosome"/>
    <property type="evidence" value="ECO:0007669"/>
    <property type="project" value="UniProtKB-KW"/>
</dbReference>
<dbReference type="GO" id="GO:0019843">
    <property type="term" value="F:rRNA binding"/>
    <property type="evidence" value="ECO:0007669"/>
    <property type="project" value="UniProtKB-UniRule"/>
</dbReference>
<dbReference type="GO" id="GO:0003735">
    <property type="term" value="F:structural constituent of ribosome"/>
    <property type="evidence" value="ECO:0007669"/>
    <property type="project" value="InterPro"/>
</dbReference>
<dbReference type="GO" id="GO:0000049">
    <property type="term" value="F:tRNA binding"/>
    <property type="evidence" value="ECO:0007669"/>
    <property type="project" value="UniProtKB-UniRule"/>
</dbReference>
<dbReference type="GO" id="GO:0006412">
    <property type="term" value="P:translation"/>
    <property type="evidence" value="ECO:0007669"/>
    <property type="project" value="UniProtKB-UniRule"/>
</dbReference>
<dbReference type="FunFam" id="3.30.1440.10:FF:000001">
    <property type="entry name" value="50S ribosomal protein L5"/>
    <property type="match status" value="1"/>
</dbReference>
<dbReference type="Gene3D" id="3.30.1440.10">
    <property type="match status" value="1"/>
</dbReference>
<dbReference type="HAMAP" id="MF_01333_B">
    <property type="entry name" value="Ribosomal_uL5_B"/>
    <property type="match status" value="1"/>
</dbReference>
<dbReference type="InterPro" id="IPR002132">
    <property type="entry name" value="Ribosomal_uL5"/>
</dbReference>
<dbReference type="InterPro" id="IPR020930">
    <property type="entry name" value="Ribosomal_uL5_bac-type"/>
</dbReference>
<dbReference type="InterPro" id="IPR031309">
    <property type="entry name" value="Ribosomal_uL5_C"/>
</dbReference>
<dbReference type="InterPro" id="IPR020929">
    <property type="entry name" value="Ribosomal_uL5_CS"/>
</dbReference>
<dbReference type="InterPro" id="IPR022803">
    <property type="entry name" value="Ribosomal_uL5_dom_sf"/>
</dbReference>
<dbReference type="InterPro" id="IPR031310">
    <property type="entry name" value="Ribosomal_uL5_N"/>
</dbReference>
<dbReference type="NCBIfam" id="NF000585">
    <property type="entry name" value="PRK00010.1"/>
    <property type="match status" value="1"/>
</dbReference>
<dbReference type="PANTHER" id="PTHR11994">
    <property type="entry name" value="60S RIBOSOMAL PROTEIN L11-RELATED"/>
    <property type="match status" value="1"/>
</dbReference>
<dbReference type="Pfam" id="PF00281">
    <property type="entry name" value="Ribosomal_L5"/>
    <property type="match status" value="1"/>
</dbReference>
<dbReference type="Pfam" id="PF00673">
    <property type="entry name" value="Ribosomal_L5_C"/>
    <property type="match status" value="1"/>
</dbReference>
<dbReference type="PIRSF" id="PIRSF002161">
    <property type="entry name" value="Ribosomal_L5"/>
    <property type="match status" value="1"/>
</dbReference>
<dbReference type="SUPFAM" id="SSF55282">
    <property type="entry name" value="RL5-like"/>
    <property type="match status" value="1"/>
</dbReference>
<dbReference type="PROSITE" id="PS00358">
    <property type="entry name" value="RIBOSOMAL_L5"/>
    <property type="match status" value="1"/>
</dbReference>
<accession>Q07KN0</accession>
<name>RL5_RHOP5</name>
<proteinExistence type="inferred from homology"/>
<comment type="function">
    <text evidence="1">This is one of the proteins that bind and probably mediate the attachment of the 5S RNA into the large ribosomal subunit, where it forms part of the central protuberance. In the 70S ribosome it contacts protein S13 of the 30S subunit (bridge B1b), connecting the 2 subunits; this bridge is implicated in subunit movement. Contacts the P site tRNA; the 5S rRNA and some of its associated proteins might help stabilize positioning of ribosome-bound tRNAs.</text>
</comment>
<comment type="subunit">
    <text evidence="1">Part of the 50S ribosomal subunit; part of the 5S rRNA/L5/L18/L25 subcomplex. Contacts the 5S rRNA and the P site tRNA. Forms a bridge to the 30S subunit in the 70S ribosome.</text>
</comment>
<comment type="similarity">
    <text evidence="1">Belongs to the universal ribosomal protein uL5 family.</text>
</comment>
<sequence length="185" mass="20977">MSETAYTPRLRAEYDQSIRSKLTEEFGYANVMQVPRLDKVVLNMGVGEAVNDRKKAEQAAADLGLIAGQKPIITFSRMAISTFKLRENQPIGCKVTLRKAKMYEFIDRLITVALPRVRDFRGLNPKSFDGRGNYSLGIKEHIIFPEIDFDKMGETWGMDITVCTTAKTDDEARALLTAFNFPFRQ</sequence>
<organism>
    <name type="scientific">Rhodopseudomonas palustris (strain BisA53)</name>
    <dbReference type="NCBI Taxonomy" id="316055"/>
    <lineage>
        <taxon>Bacteria</taxon>
        <taxon>Pseudomonadati</taxon>
        <taxon>Pseudomonadota</taxon>
        <taxon>Alphaproteobacteria</taxon>
        <taxon>Hyphomicrobiales</taxon>
        <taxon>Nitrobacteraceae</taxon>
        <taxon>Rhodopseudomonas</taxon>
    </lineage>
</organism>
<evidence type="ECO:0000255" key="1">
    <source>
        <dbReference type="HAMAP-Rule" id="MF_01333"/>
    </source>
</evidence>
<evidence type="ECO:0000305" key="2"/>
<reference key="1">
    <citation type="submission" date="2006-09" db="EMBL/GenBank/DDBJ databases">
        <title>Complete sequence of Rhodopseudomonas palustris BisA53.</title>
        <authorList>
            <consortium name="US DOE Joint Genome Institute"/>
            <person name="Copeland A."/>
            <person name="Lucas S."/>
            <person name="Lapidus A."/>
            <person name="Barry K."/>
            <person name="Detter J.C."/>
            <person name="Glavina del Rio T."/>
            <person name="Hammon N."/>
            <person name="Israni S."/>
            <person name="Dalin E."/>
            <person name="Tice H."/>
            <person name="Pitluck S."/>
            <person name="Chain P."/>
            <person name="Malfatti S."/>
            <person name="Shin M."/>
            <person name="Vergez L."/>
            <person name="Schmutz J."/>
            <person name="Larimer F."/>
            <person name="Land M."/>
            <person name="Hauser L."/>
            <person name="Pelletier D.A."/>
            <person name="Kyrpides N."/>
            <person name="Kim E."/>
            <person name="Harwood C.S."/>
            <person name="Oda Y."/>
            <person name="Richardson P."/>
        </authorList>
    </citation>
    <scope>NUCLEOTIDE SEQUENCE [LARGE SCALE GENOMIC DNA]</scope>
    <source>
        <strain>BisA53</strain>
    </source>
</reference>
<protein>
    <recommendedName>
        <fullName evidence="1">Large ribosomal subunit protein uL5</fullName>
    </recommendedName>
    <alternativeName>
        <fullName evidence="2">50S ribosomal protein L5</fullName>
    </alternativeName>
</protein>
<feature type="chain" id="PRO_1000052808" description="Large ribosomal subunit protein uL5">
    <location>
        <begin position="1"/>
        <end position="185"/>
    </location>
</feature>
<keyword id="KW-0687">Ribonucleoprotein</keyword>
<keyword id="KW-0689">Ribosomal protein</keyword>
<keyword id="KW-0694">RNA-binding</keyword>
<keyword id="KW-0699">rRNA-binding</keyword>
<keyword id="KW-0820">tRNA-binding</keyword>